<feature type="chain" id="PRO_0000310032" description="Large ribosomal subunit protein uL2">
    <location>
        <begin position="1"/>
        <end position="287"/>
    </location>
</feature>
<feature type="region of interest" description="Disordered" evidence="2">
    <location>
        <begin position="221"/>
        <end position="287"/>
    </location>
</feature>
<feature type="compositionally biased region" description="Basic residues" evidence="2">
    <location>
        <begin position="258"/>
        <end position="287"/>
    </location>
</feature>
<protein>
    <recommendedName>
        <fullName evidence="1">Large ribosomal subunit protein uL2</fullName>
    </recommendedName>
    <alternativeName>
        <fullName evidence="3">50S ribosomal protein L2</fullName>
    </alternativeName>
</protein>
<organism>
    <name type="scientific">Synechococcus sp. (strain RCC307)</name>
    <dbReference type="NCBI Taxonomy" id="316278"/>
    <lineage>
        <taxon>Bacteria</taxon>
        <taxon>Bacillati</taxon>
        <taxon>Cyanobacteriota</taxon>
        <taxon>Cyanophyceae</taxon>
        <taxon>Synechococcales</taxon>
        <taxon>Synechococcaceae</taxon>
        <taxon>Synechococcus</taxon>
    </lineage>
</organism>
<accession>A5GVW3</accession>
<dbReference type="EMBL" id="CT978603">
    <property type="protein sequence ID" value="CAK29022.1"/>
    <property type="molecule type" value="Genomic_DNA"/>
</dbReference>
<dbReference type="SMR" id="A5GVW3"/>
<dbReference type="STRING" id="316278.SynRCC307_2119"/>
<dbReference type="KEGG" id="syr:SynRCC307_2119"/>
<dbReference type="eggNOG" id="COG0090">
    <property type="taxonomic scope" value="Bacteria"/>
</dbReference>
<dbReference type="HOGENOM" id="CLU_036235_2_1_3"/>
<dbReference type="OrthoDB" id="9778722at2"/>
<dbReference type="Proteomes" id="UP000001115">
    <property type="component" value="Chromosome"/>
</dbReference>
<dbReference type="GO" id="GO:0015934">
    <property type="term" value="C:large ribosomal subunit"/>
    <property type="evidence" value="ECO:0007669"/>
    <property type="project" value="InterPro"/>
</dbReference>
<dbReference type="GO" id="GO:0019843">
    <property type="term" value="F:rRNA binding"/>
    <property type="evidence" value="ECO:0007669"/>
    <property type="project" value="UniProtKB-UniRule"/>
</dbReference>
<dbReference type="GO" id="GO:0003735">
    <property type="term" value="F:structural constituent of ribosome"/>
    <property type="evidence" value="ECO:0007669"/>
    <property type="project" value="InterPro"/>
</dbReference>
<dbReference type="GO" id="GO:0016740">
    <property type="term" value="F:transferase activity"/>
    <property type="evidence" value="ECO:0007669"/>
    <property type="project" value="InterPro"/>
</dbReference>
<dbReference type="GO" id="GO:0006412">
    <property type="term" value="P:translation"/>
    <property type="evidence" value="ECO:0007669"/>
    <property type="project" value="UniProtKB-UniRule"/>
</dbReference>
<dbReference type="FunFam" id="2.30.30.30:FF:000001">
    <property type="entry name" value="50S ribosomal protein L2"/>
    <property type="match status" value="1"/>
</dbReference>
<dbReference type="FunFam" id="2.40.50.140:FF:000003">
    <property type="entry name" value="50S ribosomal protein L2"/>
    <property type="match status" value="1"/>
</dbReference>
<dbReference type="FunFam" id="4.10.950.10:FF:000001">
    <property type="entry name" value="50S ribosomal protein L2"/>
    <property type="match status" value="1"/>
</dbReference>
<dbReference type="Gene3D" id="2.30.30.30">
    <property type="match status" value="1"/>
</dbReference>
<dbReference type="Gene3D" id="2.40.50.140">
    <property type="entry name" value="Nucleic acid-binding proteins"/>
    <property type="match status" value="1"/>
</dbReference>
<dbReference type="Gene3D" id="4.10.950.10">
    <property type="entry name" value="Ribosomal protein L2, domain 3"/>
    <property type="match status" value="1"/>
</dbReference>
<dbReference type="HAMAP" id="MF_01320_B">
    <property type="entry name" value="Ribosomal_uL2_B"/>
    <property type="match status" value="1"/>
</dbReference>
<dbReference type="InterPro" id="IPR012340">
    <property type="entry name" value="NA-bd_OB-fold"/>
</dbReference>
<dbReference type="InterPro" id="IPR014722">
    <property type="entry name" value="Rib_uL2_dom2"/>
</dbReference>
<dbReference type="InterPro" id="IPR002171">
    <property type="entry name" value="Ribosomal_uL2"/>
</dbReference>
<dbReference type="InterPro" id="IPR005880">
    <property type="entry name" value="Ribosomal_uL2_bac/org-type"/>
</dbReference>
<dbReference type="InterPro" id="IPR022669">
    <property type="entry name" value="Ribosomal_uL2_C"/>
</dbReference>
<dbReference type="InterPro" id="IPR022671">
    <property type="entry name" value="Ribosomal_uL2_CS"/>
</dbReference>
<dbReference type="InterPro" id="IPR014726">
    <property type="entry name" value="Ribosomal_uL2_dom3"/>
</dbReference>
<dbReference type="InterPro" id="IPR022666">
    <property type="entry name" value="Ribosomal_uL2_RNA-bd_dom"/>
</dbReference>
<dbReference type="InterPro" id="IPR008991">
    <property type="entry name" value="Translation_prot_SH3-like_sf"/>
</dbReference>
<dbReference type="NCBIfam" id="TIGR01171">
    <property type="entry name" value="rplB_bact"/>
    <property type="match status" value="1"/>
</dbReference>
<dbReference type="PANTHER" id="PTHR13691:SF5">
    <property type="entry name" value="LARGE RIBOSOMAL SUBUNIT PROTEIN UL2M"/>
    <property type="match status" value="1"/>
</dbReference>
<dbReference type="PANTHER" id="PTHR13691">
    <property type="entry name" value="RIBOSOMAL PROTEIN L2"/>
    <property type="match status" value="1"/>
</dbReference>
<dbReference type="Pfam" id="PF00181">
    <property type="entry name" value="Ribosomal_L2"/>
    <property type="match status" value="1"/>
</dbReference>
<dbReference type="Pfam" id="PF03947">
    <property type="entry name" value="Ribosomal_L2_C"/>
    <property type="match status" value="1"/>
</dbReference>
<dbReference type="PIRSF" id="PIRSF002158">
    <property type="entry name" value="Ribosomal_L2"/>
    <property type="match status" value="1"/>
</dbReference>
<dbReference type="SMART" id="SM01383">
    <property type="entry name" value="Ribosomal_L2"/>
    <property type="match status" value="1"/>
</dbReference>
<dbReference type="SMART" id="SM01382">
    <property type="entry name" value="Ribosomal_L2_C"/>
    <property type="match status" value="1"/>
</dbReference>
<dbReference type="SUPFAM" id="SSF50249">
    <property type="entry name" value="Nucleic acid-binding proteins"/>
    <property type="match status" value="1"/>
</dbReference>
<dbReference type="SUPFAM" id="SSF50104">
    <property type="entry name" value="Translation proteins SH3-like domain"/>
    <property type="match status" value="1"/>
</dbReference>
<dbReference type="PROSITE" id="PS00467">
    <property type="entry name" value="RIBOSOMAL_L2"/>
    <property type="match status" value="1"/>
</dbReference>
<sequence>MGIRSFRPYTPGTRTRVVSDFSEVTRRKPERSLVVAKHRRKGRNNRGVITCRHRGGGHKRLYRIVDFRRDKHGVVARVAAIQYDPHRNARLALLYYTDGEKRYILHPAGVQVGQEVVAGPEAPIEVGNALPLSAIPLGSAVHNVELYAGRGGQMVRTAGASAQVMAKEGDYVALKLPSTEVRLVRRECYATLGEVGNSEVRNTSLGKAGRKRWLGRRPEVRGSVMNPCDHPHGGGEGRAPIGRSGPVTPWGKPALGLKTRKRNKPSNKFVLRKRRKTSKRSRGGRDS</sequence>
<keyword id="KW-1185">Reference proteome</keyword>
<keyword id="KW-0687">Ribonucleoprotein</keyword>
<keyword id="KW-0689">Ribosomal protein</keyword>
<keyword id="KW-0694">RNA-binding</keyword>
<keyword id="KW-0699">rRNA-binding</keyword>
<comment type="function">
    <text evidence="1">One of the primary rRNA binding proteins. Required for association of the 30S and 50S subunits to form the 70S ribosome, for tRNA binding and peptide bond formation. It has been suggested to have peptidyltransferase activity; this is somewhat controversial. Makes several contacts with the 16S rRNA in the 70S ribosome.</text>
</comment>
<comment type="subunit">
    <text evidence="1">Part of the 50S ribosomal subunit. Forms a bridge to the 30S subunit in the 70S ribosome.</text>
</comment>
<comment type="similarity">
    <text evidence="1">Belongs to the universal ribosomal protein uL2 family.</text>
</comment>
<evidence type="ECO:0000255" key="1">
    <source>
        <dbReference type="HAMAP-Rule" id="MF_01320"/>
    </source>
</evidence>
<evidence type="ECO:0000256" key="2">
    <source>
        <dbReference type="SAM" id="MobiDB-lite"/>
    </source>
</evidence>
<evidence type="ECO:0000305" key="3"/>
<reference key="1">
    <citation type="submission" date="2006-05" db="EMBL/GenBank/DDBJ databases">
        <authorList>
            <consortium name="Genoscope"/>
        </authorList>
    </citation>
    <scope>NUCLEOTIDE SEQUENCE [LARGE SCALE GENOMIC DNA]</scope>
    <source>
        <strain>RCC307</strain>
    </source>
</reference>
<proteinExistence type="inferred from homology"/>
<gene>
    <name evidence="1" type="primary">rplB</name>
    <name evidence="1" type="synonym">rpl2</name>
    <name type="ordered locus">SynRCC307_2119</name>
</gene>
<name>RL2_SYNR3</name>